<feature type="chain" id="PRO_0000188865" description="tRNA modification GTPase MnmE">
    <location>
        <begin position="1"/>
        <end position="442"/>
    </location>
</feature>
<feature type="domain" description="TrmE-type G">
    <location>
        <begin position="215"/>
        <end position="364"/>
    </location>
</feature>
<feature type="binding site" evidence="1">
    <location>
        <position position="23"/>
    </location>
    <ligand>
        <name>(6S)-5-formyl-5,6,7,8-tetrahydrofolate</name>
        <dbReference type="ChEBI" id="CHEBI:57457"/>
    </ligand>
</feature>
<feature type="binding site" evidence="1">
    <location>
        <position position="82"/>
    </location>
    <ligand>
        <name>(6S)-5-formyl-5,6,7,8-tetrahydrofolate</name>
        <dbReference type="ChEBI" id="CHEBI:57457"/>
    </ligand>
</feature>
<feature type="binding site" evidence="1">
    <location>
        <position position="121"/>
    </location>
    <ligand>
        <name>(6S)-5-formyl-5,6,7,8-tetrahydrofolate</name>
        <dbReference type="ChEBI" id="CHEBI:57457"/>
    </ligand>
</feature>
<feature type="binding site" evidence="1">
    <location>
        <begin position="225"/>
        <end position="230"/>
    </location>
    <ligand>
        <name>GTP</name>
        <dbReference type="ChEBI" id="CHEBI:37565"/>
    </ligand>
</feature>
<feature type="binding site" evidence="1">
    <location>
        <position position="225"/>
    </location>
    <ligand>
        <name>K(+)</name>
        <dbReference type="ChEBI" id="CHEBI:29103"/>
    </ligand>
</feature>
<feature type="binding site" evidence="1">
    <location>
        <position position="229"/>
    </location>
    <ligand>
        <name>Mg(2+)</name>
        <dbReference type="ChEBI" id="CHEBI:18420"/>
    </ligand>
</feature>
<feature type="binding site" evidence="1">
    <location>
        <begin position="244"/>
        <end position="250"/>
    </location>
    <ligand>
        <name>GTP</name>
        <dbReference type="ChEBI" id="CHEBI:37565"/>
    </ligand>
</feature>
<feature type="binding site" evidence="1">
    <location>
        <position position="244"/>
    </location>
    <ligand>
        <name>K(+)</name>
        <dbReference type="ChEBI" id="CHEBI:29103"/>
    </ligand>
</feature>
<feature type="binding site" evidence="1">
    <location>
        <position position="246"/>
    </location>
    <ligand>
        <name>K(+)</name>
        <dbReference type="ChEBI" id="CHEBI:29103"/>
    </ligand>
</feature>
<feature type="binding site" evidence="1">
    <location>
        <position position="249"/>
    </location>
    <ligand>
        <name>K(+)</name>
        <dbReference type="ChEBI" id="CHEBI:29103"/>
    </ligand>
</feature>
<feature type="binding site" evidence="1">
    <location>
        <position position="250"/>
    </location>
    <ligand>
        <name>Mg(2+)</name>
        <dbReference type="ChEBI" id="CHEBI:18420"/>
    </ligand>
</feature>
<feature type="binding site" evidence="1">
    <location>
        <begin position="269"/>
        <end position="272"/>
    </location>
    <ligand>
        <name>GTP</name>
        <dbReference type="ChEBI" id="CHEBI:37565"/>
    </ligand>
</feature>
<feature type="binding site" evidence="1">
    <location>
        <begin position="325"/>
        <end position="328"/>
    </location>
    <ligand>
        <name>GTP</name>
        <dbReference type="ChEBI" id="CHEBI:37565"/>
    </ligand>
</feature>
<feature type="binding site" evidence="1">
    <location>
        <position position="442"/>
    </location>
    <ligand>
        <name>(6S)-5-formyl-5,6,7,8-tetrahydrofolate</name>
        <dbReference type="ChEBI" id="CHEBI:57457"/>
    </ligand>
</feature>
<protein>
    <recommendedName>
        <fullName evidence="1">tRNA modification GTPase MnmE</fullName>
        <ecNumber evidence="1">3.6.-.-</ecNumber>
    </recommendedName>
</protein>
<evidence type="ECO:0000255" key="1">
    <source>
        <dbReference type="HAMAP-Rule" id="MF_00379"/>
    </source>
</evidence>
<comment type="function">
    <text evidence="1">Exhibits a very high intrinsic GTPase hydrolysis rate. Involved in the addition of a carboxymethylaminomethyl (cmnm) group at the wobble position (U34) of certain tRNAs, forming tRNA-cmnm(5)s(2)U34.</text>
</comment>
<comment type="cofactor">
    <cofactor evidence="1">
        <name>K(+)</name>
        <dbReference type="ChEBI" id="CHEBI:29103"/>
    </cofactor>
    <text evidence="1">Binds 1 potassium ion per subunit.</text>
</comment>
<comment type="subunit">
    <text evidence="1">Homodimer. Heterotetramer of two MnmE and two MnmG subunits.</text>
</comment>
<comment type="subcellular location">
    <subcellularLocation>
        <location evidence="1">Cytoplasm</location>
    </subcellularLocation>
</comment>
<comment type="similarity">
    <text evidence="1">Belongs to the TRAFAC class TrmE-Era-EngA-EngB-Septin-like GTPase superfamily. TrmE GTPase family.</text>
</comment>
<name>MNME_CHLPN</name>
<keyword id="KW-0963">Cytoplasm</keyword>
<keyword id="KW-0342">GTP-binding</keyword>
<keyword id="KW-0378">Hydrolase</keyword>
<keyword id="KW-0460">Magnesium</keyword>
<keyword id="KW-0479">Metal-binding</keyword>
<keyword id="KW-0547">Nucleotide-binding</keyword>
<keyword id="KW-0630">Potassium</keyword>
<keyword id="KW-0819">tRNA processing</keyword>
<reference key="1">
    <citation type="journal article" date="1999" name="Nat. Genet.">
        <title>Comparative genomes of Chlamydia pneumoniae and C. trachomatis.</title>
        <authorList>
            <person name="Kalman S."/>
            <person name="Mitchell W.P."/>
            <person name="Marathe R."/>
            <person name="Lammel C.J."/>
            <person name="Fan J."/>
            <person name="Hyman R.W."/>
            <person name="Olinger L."/>
            <person name="Grimwood J."/>
            <person name="Davis R.W."/>
            <person name="Stephens R.S."/>
        </authorList>
    </citation>
    <scope>NUCLEOTIDE SEQUENCE [LARGE SCALE GENOMIC DNA]</scope>
    <source>
        <strain>CWL029</strain>
    </source>
</reference>
<reference key="2">
    <citation type="journal article" date="2000" name="Nucleic Acids Res.">
        <title>Genome sequences of Chlamydia trachomatis MoPn and Chlamydia pneumoniae AR39.</title>
        <authorList>
            <person name="Read T.D."/>
            <person name="Brunham R.C."/>
            <person name="Shen C."/>
            <person name="Gill S.R."/>
            <person name="Heidelberg J.F."/>
            <person name="White O."/>
            <person name="Hickey E.K."/>
            <person name="Peterson J.D."/>
            <person name="Utterback T.R."/>
            <person name="Berry K.J."/>
            <person name="Bass S."/>
            <person name="Linher K.D."/>
            <person name="Weidman J.F."/>
            <person name="Khouri H.M."/>
            <person name="Craven B."/>
            <person name="Bowman C."/>
            <person name="Dodson R.J."/>
            <person name="Gwinn M.L."/>
            <person name="Nelson W.C."/>
            <person name="DeBoy R.T."/>
            <person name="Kolonay J.F."/>
            <person name="McClarty G."/>
            <person name="Salzberg S.L."/>
            <person name="Eisen J.A."/>
            <person name="Fraser C.M."/>
        </authorList>
    </citation>
    <scope>NUCLEOTIDE SEQUENCE [LARGE SCALE GENOMIC DNA]</scope>
    <source>
        <strain>AR39</strain>
    </source>
</reference>
<reference key="3">
    <citation type="journal article" date="2000" name="Nucleic Acids Res.">
        <title>Comparison of whole genome sequences of Chlamydia pneumoniae J138 from Japan and CWL029 from USA.</title>
        <authorList>
            <person name="Shirai M."/>
            <person name="Hirakawa H."/>
            <person name="Kimoto M."/>
            <person name="Tabuchi M."/>
            <person name="Kishi F."/>
            <person name="Ouchi K."/>
            <person name="Shiba T."/>
            <person name="Ishii K."/>
            <person name="Hattori M."/>
            <person name="Kuhara S."/>
            <person name="Nakazawa T."/>
        </authorList>
    </citation>
    <scope>NUCLEOTIDE SEQUENCE [LARGE SCALE GENOMIC DNA]</scope>
    <source>
        <strain>J138</strain>
    </source>
</reference>
<reference key="4">
    <citation type="submission" date="2002-05" db="EMBL/GenBank/DDBJ databases">
        <title>The genome sequence of Chlamydia pneumoniae TW183 and comparison with other Chlamydia strains based on whole genome sequence analysis.</title>
        <authorList>
            <person name="Geng M.M."/>
            <person name="Schuhmacher A."/>
            <person name="Muehldorfer I."/>
            <person name="Bensch K.W."/>
            <person name="Schaefer K.P."/>
            <person name="Schneider S."/>
            <person name="Pohl T."/>
            <person name="Essig A."/>
            <person name="Marre R."/>
            <person name="Melchers K."/>
        </authorList>
    </citation>
    <scope>NUCLEOTIDE SEQUENCE [LARGE SCALE GENOMIC DNA]</scope>
    <source>
        <strain>TW-183</strain>
    </source>
</reference>
<proteinExistence type="inferred from homology"/>
<dbReference type="EC" id="3.6.-.-" evidence="1"/>
<dbReference type="EMBL" id="AE001363">
    <property type="protein sequence ID" value="AAD18976.1"/>
    <property type="molecule type" value="Genomic_DNA"/>
</dbReference>
<dbReference type="EMBL" id="AE002161">
    <property type="protein sequence ID" value="AAF73725.1"/>
    <property type="molecule type" value="Genomic_DNA"/>
</dbReference>
<dbReference type="EMBL" id="BA000008">
    <property type="protein sequence ID" value="BAA99046.1"/>
    <property type="molecule type" value="Genomic_DNA"/>
</dbReference>
<dbReference type="EMBL" id="AE009440">
    <property type="protein sequence ID" value="AAP98796.1"/>
    <property type="molecule type" value="Genomic_DNA"/>
</dbReference>
<dbReference type="PIR" id="D86595">
    <property type="entry name" value="D86595"/>
</dbReference>
<dbReference type="PIR" id="E72029">
    <property type="entry name" value="E72029"/>
</dbReference>
<dbReference type="RefSeq" id="NP_225033.1">
    <property type="nucleotide sequence ID" value="NC_000922.1"/>
</dbReference>
<dbReference type="RefSeq" id="WP_010883475.1">
    <property type="nucleotide sequence ID" value="NZ_LN847257.1"/>
</dbReference>
<dbReference type="SMR" id="Q9Z768"/>
<dbReference type="STRING" id="406984.CPK_ORF00245"/>
<dbReference type="GeneID" id="45050892"/>
<dbReference type="KEGG" id="cpa:CP_1031"/>
<dbReference type="KEGG" id="cpj:thdF"/>
<dbReference type="KEGG" id="cpn:CPn_0838"/>
<dbReference type="KEGG" id="cpt:CpB0867"/>
<dbReference type="PATRIC" id="fig|115713.3.peg.918"/>
<dbReference type="eggNOG" id="COG0486">
    <property type="taxonomic scope" value="Bacteria"/>
</dbReference>
<dbReference type="HOGENOM" id="CLU_019624_4_1_0"/>
<dbReference type="OrthoDB" id="9805918at2"/>
<dbReference type="Proteomes" id="UP000000583">
    <property type="component" value="Chromosome"/>
</dbReference>
<dbReference type="Proteomes" id="UP000000801">
    <property type="component" value="Chromosome"/>
</dbReference>
<dbReference type="GO" id="GO:0005829">
    <property type="term" value="C:cytosol"/>
    <property type="evidence" value="ECO:0007669"/>
    <property type="project" value="TreeGrafter"/>
</dbReference>
<dbReference type="GO" id="GO:0005525">
    <property type="term" value="F:GTP binding"/>
    <property type="evidence" value="ECO:0007669"/>
    <property type="project" value="UniProtKB-UniRule"/>
</dbReference>
<dbReference type="GO" id="GO:0003924">
    <property type="term" value="F:GTPase activity"/>
    <property type="evidence" value="ECO:0007669"/>
    <property type="project" value="UniProtKB-UniRule"/>
</dbReference>
<dbReference type="GO" id="GO:0046872">
    <property type="term" value="F:metal ion binding"/>
    <property type="evidence" value="ECO:0007669"/>
    <property type="project" value="UniProtKB-KW"/>
</dbReference>
<dbReference type="GO" id="GO:0030488">
    <property type="term" value="P:tRNA methylation"/>
    <property type="evidence" value="ECO:0007669"/>
    <property type="project" value="TreeGrafter"/>
</dbReference>
<dbReference type="GO" id="GO:0002098">
    <property type="term" value="P:tRNA wobble uridine modification"/>
    <property type="evidence" value="ECO:0007669"/>
    <property type="project" value="TreeGrafter"/>
</dbReference>
<dbReference type="CDD" id="cd04164">
    <property type="entry name" value="trmE"/>
    <property type="match status" value="1"/>
</dbReference>
<dbReference type="CDD" id="cd14858">
    <property type="entry name" value="TrmE_N"/>
    <property type="match status" value="1"/>
</dbReference>
<dbReference type="FunFam" id="3.30.1360.120:FF:000003">
    <property type="entry name" value="tRNA modification GTPase MnmE"/>
    <property type="match status" value="1"/>
</dbReference>
<dbReference type="FunFam" id="3.40.50.300:FF:001376">
    <property type="entry name" value="tRNA modification GTPase MnmE"/>
    <property type="match status" value="1"/>
</dbReference>
<dbReference type="Gene3D" id="3.40.50.300">
    <property type="entry name" value="P-loop containing nucleotide triphosphate hydrolases"/>
    <property type="match status" value="1"/>
</dbReference>
<dbReference type="Gene3D" id="3.30.1360.120">
    <property type="entry name" value="Probable tRNA modification gtpase trme, domain 1"/>
    <property type="match status" value="1"/>
</dbReference>
<dbReference type="Gene3D" id="1.20.120.430">
    <property type="entry name" value="tRNA modification GTPase MnmE domain 2"/>
    <property type="match status" value="1"/>
</dbReference>
<dbReference type="HAMAP" id="MF_00379">
    <property type="entry name" value="GTPase_MnmE"/>
    <property type="match status" value="1"/>
</dbReference>
<dbReference type="InterPro" id="IPR031168">
    <property type="entry name" value="G_TrmE"/>
</dbReference>
<dbReference type="InterPro" id="IPR006073">
    <property type="entry name" value="GTP-bd"/>
</dbReference>
<dbReference type="InterPro" id="IPR018948">
    <property type="entry name" value="GTP-bd_TrmE_N"/>
</dbReference>
<dbReference type="InterPro" id="IPR004520">
    <property type="entry name" value="GTPase_MnmE"/>
</dbReference>
<dbReference type="InterPro" id="IPR027368">
    <property type="entry name" value="MnmE_dom2"/>
</dbReference>
<dbReference type="InterPro" id="IPR025867">
    <property type="entry name" value="MnmE_helical"/>
</dbReference>
<dbReference type="InterPro" id="IPR027417">
    <property type="entry name" value="P-loop_NTPase"/>
</dbReference>
<dbReference type="InterPro" id="IPR005225">
    <property type="entry name" value="Small_GTP-bd"/>
</dbReference>
<dbReference type="InterPro" id="IPR027266">
    <property type="entry name" value="TrmE/GcvT_dom1"/>
</dbReference>
<dbReference type="NCBIfam" id="TIGR00450">
    <property type="entry name" value="mnmE_trmE_thdF"/>
    <property type="match status" value="1"/>
</dbReference>
<dbReference type="NCBIfam" id="TIGR00231">
    <property type="entry name" value="small_GTP"/>
    <property type="match status" value="1"/>
</dbReference>
<dbReference type="PANTHER" id="PTHR42714">
    <property type="entry name" value="TRNA MODIFICATION GTPASE GTPBP3"/>
    <property type="match status" value="1"/>
</dbReference>
<dbReference type="PANTHER" id="PTHR42714:SF2">
    <property type="entry name" value="TRNA MODIFICATION GTPASE GTPBP3, MITOCHONDRIAL"/>
    <property type="match status" value="1"/>
</dbReference>
<dbReference type="Pfam" id="PF01926">
    <property type="entry name" value="MMR_HSR1"/>
    <property type="match status" value="1"/>
</dbReference>
<dbReference type="Pfam" id="PF12631">
    <property type="entry name" value="MnmE_helical"/>
    <property type="match status" value="1"/>
</dbReference>
<dbReference type="Pfam" id="PF10396">
    <property type="entry name" value="TrmE_N"/>
    <property type="match status" value="1"/>
</dbReference>
<dbReference type="PRINTS" id="PR00326">
    <property type="entry name" value="GTP1OBG"/>
</dbReference>
<dbReference type="SUPFAM" id="SSF52540">
    <property type="entry name" value="P-loop containing nucleoside triphosphate hydrolases"/>
    <property type="match status" value="1"/>
</dbReference>
<dbReference type="PROSITE" id="PS51709">
    <property type="entry name" value="G_TRME"/>
    <property type="match status" value="1"/>
</dbReference>
<organism>
    <name type="scientific">Chlamydia pneumoniae</name>
    <name type="common">Chlamydophila pneumoniae</name>
    <dbReference type="NCBI Taxonomy" id="83558"/>
    <lineage>
        <taxon>Bacteria</taxon>
        <taxon>Pseudomonadati</taxon>
        <taxon>Chlamydiota</taxon>
        <taxon>Chlamydiia</taxon>
        <taxon>Chlamydiales</taxon>
        <taxon>Chlamydiaceae</taxon>
        <taxon>Chlamydia/Chlamydophila group</taxon>
        <taxon>Chlamydia</taxon>
    </lineage>
</organism>
<gene>
    <name evidence="1" type="primary">mnmE</name>
    <name evidence="1" type="synonym">thdF</name>
    <name evidence="1" type="synonym">trmE</name>
    <name type="ordered locus">CPn_0838</name>
    <name type="ordered locus">CP_1031</name>
    <name type="ordered locus">CpB0867</name>
</gene>
<sequence>MLKHDTIAAIATPPGEGSIAVVRLSGPQAIVIADRIFSGSVASFASHTIHLGQVIFEETLIDQALLLLMRSPRSFTGEDVVEFQCHGGFFACSQILDALIALGARPALPGEFSQRAFLNGKIDLVQAEAIQNLIVAENIDAFRIAQTHFQGNFSKKIQEIHTLIIEALAFLEVLADFPEEEQPDLLVPQEKIQNALHIVEDFISSFDEGQRLAQGTSLILAGKPNVGKSSLLNALLQKNRAIVTHIPGTTRDILEEQWLLQGKRIRLLDTAGQRTTDNDIEKEGIERALSAMEEADGILWVIDATQPLEDLPKILFTKPSFLLWNKADLTPPPFLDTSLPQFAISAKTGEGLTQVKQALIQWMQKQEAGKTSKVFLVSSRHHMILQEVARCLKEAQQNLYLQPPEIIALELREALHSIGMLSGKEVTESILGEIFSKFCIGK</sequence>
<accession>Q9Z768</accession>